<dbReference type="EC" id="2.3.1.4" evidence="4"/>
<dbReference type="EMBL" id="AY772189">
    <property type="protein sequence ID" value="AAV40998.1"/>
    <property type="molecule type" value="mRNA"/>
</dbReference>
<dbReference type="EMBL" id="AC108758">
    <property type="status" value="NOT_ANNOTATED_CDS"/>
    <property type="molecule type" value="Genomic_DNA"/>
</dbReference>
<dbReference type="EMBL" id="AP008215">
    <property type="protein sequence ID" value="BAF25444.1"/>
    <property type="molecule type" value="Genomic_DNA"/>
</dbReference>
<dbReference type="EMBL" id="AP014965">
    <property type="protein sequence ID" value="BAT08714.1"/>
    <property type="molecule type" value="Genomic_DNA"/>
</dbReference>
<dbReference type="EMBL" id="AK063214">
    <property type="protein sequence ID" value="BAG88597.1"/>
    <property type="molecule type" value="mRNA"/>
</dbReference>
<dbReference type="RefSeq" id="XP_015610795.1">
    <property type="nucleotide sequence ID" value="XM_015755309.1"/>
</dbReference>
<dbReference type="SMR" id="Q5U9F2"/>
<dbReference type="FunCoup" id="Q5U9F2">
    <property type="interactions" value="2023"/>
</dbReference>
<dbReference type="STRING" id="39947.Q5U9F2"/>
<dbReference type="PaxDb" id="39947-Q5U9F2"/>
<dbReference type="EnsemblPlants" id="Os09t0488000-01">
    <property type="protein sequence ID" value="Os09t0488000-01"/>
    <property type="gene ID" value="Os09g0488000"/>
</dbReference>
<dbReference type="Gramene" id="Os09t0488000-01">
    <property type="protein sequence ID" value="Os09t0488000-01"/>
    <property type="gene ID" value="Os09g0488000"/>
</dbReference>
<dbReference type="KEGG" id="dosa:Os09g0488000"/>
<dbReference type="eggNOG" id="KOG3396">
    <property type="taxonomic scope" value="Eukaryota"/>
</dbReference>
<dbReference type="HOGENOM" id="CLU_072095_3_0_1"/>
<dbReference type="InParanoid" id="Q5U9F2"/>
<dbReference type="OMA" id="LVVEMKF"/>
<dbReference type="OrthoDB" id="10039976at2759"/>
<dbReference type="PlantReactome" id="R-OSA-1119386">
    <property type="pathway name" value="UDP-N-acetylgalactosamine biosynthesis"/>
</dbReference>
<dbReference type="PlantReactome" id="R-OSA-9030654">
    <property type="pathway name" value="Primary root development"/>
</dbReference>
<dbReference type="SABIO-RK" id="Q5U9F2"/>
<dbReference type="UniPathway" id="UPA00113">
    <property type="reaction ID" value="UER00529"/>
</dbReference>
<dbReference type="Proteomes" id="UP000000763">
    <property type="component" value="Chromosome 9"/>
</dbReference>
<dbReference type="Proteomes" id="UP000059680">
    <property type="component" value="Chromosome 9"/>
</dbReference>
<dbReference type="GO" id="GO:0005789">
    <property type="term" value="C:endoplasmic reticulum membrane"/>
    <property type="evidence" value="ECO:0007669"/>
    <property type="project" value="UniProtKB-SubCell"/>
</dbReference>
<dbReference type="GO" id="GO:0004343">
    <property type="term" value="F:glucosamine 6-phosphate N-acetyltransferase activity"/>
    <property type="evidence" value="ECO:0000314"/>
    <property type="project" value="UniProtKB"/>
</dbReference>
<dbReference type="GO" id="GO:0006045">
    <property type="term" value="P:N-acetylglucosamine biosynthetic process"/>
    <property type="evidence" value="ECO:0000314"/>
    <property type="project" value="UniProtKB"/>
</dbReference>
<dbReference type="GO" id="GO:0048364">
    <property type="term" value="P:root development"/>
    <property type="evidence" value="ECO:0000315"/>
    <property type="project" value="UniProtKB"/>
</dbReference>
<dbReference type="GO" id="GO:0006048">
    <property type="term" value="P:UDP-N-acetylglucosamine biosynthetic process"/>
    <property type="evidence" value="ECO:0007669"/>
    <property type="project" value="UniProtKB-UniPathway"/>
</dbReference>
<dbReference type="CDD" id="cd04301">
    <property type="entry name" value="NAT_SF"/>
    <property type="match status" value="1"/>
</dbReference>
<dbReference type="FunFam" id="3.40.630.30:FF:000048">
    <property type="entry name" value="Glucosamine 6-phosphate N-acetyltransferase"/>
    <property type="match status" value="1"/>
</dbReference>
<dbReference type="Gene3D" id="3.40.630.30">
    <property type="match status" value="1"/>
</dbReference>
<dbReference type="InterPro" id="IPR016181">
    <property type="entry name" value="Acyl_CoA_acyltransferase"/>
</dbReference>
<dbReference type="InterPro" id="IPR000182">
    <property type="entry name" value="GNAT_dom"/>
</dbReference>
<dbReference type="InterPro" id="IPR039143">
    <property type="entry name" value="GNPNAT1-like"/>
</dbReference>
<dbReference type="PANTHER" id="PTHR13355">
    <property type="entry name" value="GLUCOSAMINE 6-PHOSPHATE N-ACETYLTRANSFERASE"/>
    <property type="match status" value="1"/>
</dbReference>
<dbReference type="PANTHER" id="PTHR13355:SF19">
    <property type="entry name" value="GLUCOSAMINE 6-PHOSPHATE N-ACETYLTRANSFERASE 1"/>
    <property type="match status" value="1"/>
</dbReference>
<dbReference type="Pfam" id="PF00583">
    <property type="entry name" value="Acetyltransf_1"/>
    <property type="match status" value="1"/>
</dbReference>
<dbReference type="SUPFAM" id="SSF55729">
    <property type="entry name" value="Acyl-CoA N-acyltransferases (Nat)"/>
    <property type="match status" value="1"/>
</dbReference>
<dbReference type="PROSITE" id="PS51186">
    <property type="entry name" value="GNAT"/>
    <property type="match status" value="1"/>
</dbReference>
<name>GNA1_ORYSJ</name>
<keyword id="KW-0012">Acyltransferase</keyword>
<keyword id="KW-0256">Endoplasmic reticulum</keyword>
<keyword id="KW-0472">Membrane</keyword>
<keyword id="KW-1185">Reference proteome</keyword>
<keyword id="KW-0808">Transferase</keyword>
<protein>
    <recommendedName>
        <fullName>Glucosamine 6-phosphate N-acetyltransferase 1</fullName>
        <ecNumber evidence="4">2.3.1.4</ecNumber>
    </recommendedName>
    <alternativeName>
        <fullName>Glucose-6-phosphate acetyltransferase 1</fullName>
        <shortName>OsGNA1</shortName>
    </alternativeName>
    <alternativeName>
        <fullName>Phosphoglucosamine acetylase 1</fullName>
    </alternativeName>
    <alternativeName>
        <fullName>Phosphoglucosamine transacetylase 1</fullName>
    </alternativeName>
</protein>
<sequence>MEQPLPTAAAEAAAAGGDGEAYRIRPLELADISRGFLGLLNQLSPSPPLTEEAFRARFEELAALGADHLVLVAEDAATGRLAAAGAVLVERKFIRRCGRVGHVEDVVVDAAARGRGLGERVVRRLVEHARGRGCYKVIINCTPELTGFYAKCGFVEKNVQMGLYF</sequence>
<gene>
    <name type="primary">GNA1</name>
    <name type="ordered locus">Os09g0488000</name>
    <name type="ordered locus">LOC_Os09g31310</name>
</gene>
<comment type="function">
    <text evidence="4">Acetyltransferase involved in de novo biosynthesis of UDP-N-acetylglucosamine (UDP-GlcNAc) in roots and is required for maintaining normal root cell shape. UDP-GlcNAc is an essential metabolite that serves as an initial sugar donor for N-glycan synthesis and thus plays an important role in protein and lipid glycosylation.</text>
</comment>
<comment type="catalytic activity">
    <reaction evidence="4">
        <text>D-glucosamine 6-phosphate + acetyl-CoA = N-acetyl-D-glucosamine 6-phosphate + CoA + H(+)</text>
        <dbReference type="Rhea" id="RHEA:10292"/>
        <dbReference type="ChEBI" id="CHEBI:15378"/>
        <dbReference type="ChEBI" id="CHEBI:57287"/>
        <dbReference type="ChEBI" id="CHEBI:57288"/>
        <dbReference type="ChEBI" id="CHEBI:57513"/>
        <dbReference type="ChEBI" id="CHEBI:58725"/>
        <dbReference type="EC" id="2.3.1.4"/>
    </reaction>
</comment>
<comment type="biophysicochemical properties">
    <kinetics>
        <KM evidence="4">180 uM for acetyl-coenzyme A</KM>
        <KM evidence="4">145 uM for glucosamine-6-phosphate</KM>
    </kinetics>
</comment>
<comment type="pathway">
    <text>Nucleotide-sugar biosynthesis; UDP-N-acetyl-alpha-D-glucosamine biosynthesis; N-acetyl-alpha-D-glucosamine 1-phosphate from alpha-D-glucosamine 6-phosphate (route I): step 1/2.</text>
</comment>
<comment type="subunit">
    <text evidence="1">Homodimer.</text>
</comment>
<comment type="subcellular location">
    <subcellularLocation>
        <location evidence="1">Endoplasmic reticulum membrane</location>
        <topology evidence="1">Peripheral membrane protein</topology>
    </subcellularLocation>
</comment>
<comment type="tissue specificity">
    <text evidence="4">Highly expressed in the root elongation zone and at lower levels in leaves and grains.</text>
</comment>
<comment type="disruption phenotype">
    <text evidence="4">Short roots, disruption of microtubules and shrinkage of cells in the root elongation zone.</text>
</comment>
<comment type="similarity">
    <text evidence="5">Belongs to the acetyltransferase family. GNA1 subfamily.</text>
</comment>
<proteinExistence type="evidence at protein level"/>
<accession>Q5U9F2</accession>
<accession>A0A0N7KR10</accession>
<feature type="chain" id="PRO_0000421038" description="Glucosamine 6-phosphate N-acetyltransferase 1">
    <location>
        <begin position="1"/>
        <end position="165"/>
    </location>
</feature>
<feature type="domain" description="N-acetyltransferase" evidence="3">
    <location>
        <begin position="22"/>
        <end position="165"/>
    </location>
</feature>
<feature type="binding site" evidence="1">
    <location>
        <position position="44"/>
    </location>
    <ligand>
        <name>substrate</name>
    </ligand>
</feature>
<feature type="binding site" evidence="2">
    <location>
        <begin position="92"/>
        <end position="95"/>
    </location>
    <ligand>
        <name>substrate</name>
    </ligand>
</feature>
<feature type="binding site" evidence="2">
    <location>
        <begin position="104"/>
        <end position="106"/>
    </location>
    <ligand>
        <name>substrate</name>
    </ligand>
</feature>
<feature type="binding site" evidence="2">
    <location>
        <begin position="114"/>
        <end position="119"/>
    </location>
    <ligand>
        <name>acetyl-CoA</name>
        <dbReference type="ChEBI" id="CHEBI:57288"/>
    </ligand>
</feature>
<feature type="binding site" evidence="2">
    <location>
        <begin position="135"/>
        <end position="136"/>
    </location>
    <ligand>
        <name>substrate</name>
    </ligand>
</feature>
<feature type="binding site" evidence="2">
    <location>
        <begin position="149"/>
        <end position="151"/>
    </location>
    <ligand>
        <name>acetyl-CoA</name>
        <dbReference type="ChEBI" id="CHEBI:57288"/>
    </ligand>
</feature>
<organism>
    <name type="scientific">Oryza sativa subsp. japonica</name>
    <name type="common">Rice</name>
    <dbReference type="NCBI Taxonomy" id="39947"/>
    <lineage>
        <taxon>Eukaryota</taxon>
        <taxon>Viridiplantae</taxon>
        <taxon>Streptophyta</taxon>
        <taxon>Embryophyta</taxon>
        <taxon>Tracheophyta</taxon>
        <taxon>Spermatophyta</taxon>
        <taxon>Magnoliopsida</taxon>
        <taxon>Liliopsida</taxon>
        <taxon>Poales</taxon>
        <taxon>Poaceae</taxon>
        <taxon>BOP clade</taxon>
        <taxon>Oryzoideae</taxon>
        <taxon>Oryzeae</taxon>
        <taxon>Oryzinae</taxon>
        <taxon>Oryza</taxon>
        <taxon>Oryza sativa</taxon>
    </lineage>
</organism>
<evidence type="ECO:0000250" key="1"/>
<evidence type="ECO:0000250" key="2">
    <source>
        <dbReference type="UniProtKB" id="Q96EK6"/>
    </source>
</evidence>
<evidence type="ECO:0000255" key="3">
    <source>
        <dbReference type="PROSITE-ProRule" id="PRU00532"/>
    </source>
</evidence>
<evidence type="ECO:0000269" key="4">
    <source>
    </source>
</evidence>
<evidence type="ECO:0000305" key="5"/>
<reference key="1">
    <citation type="journal article" date="2005" name="Plant Physiol.">
        <title>A novel short-root gene encodes a glucosamine-6-phosphate acetyltransferase required for maintaining normal root cell shape in rice.</title>
        <authorList>
            <person name="Jiang H."/>
            <person name="Wang S."/>
            <person name="Dang L."/>
            <person name="Wang S."/>
            <person name="Chen H."/>
            <person name="Wu Y."/>
            <person name="Jiang X."/>
            <person name="Wu P."/>
        </authorList>
    </citation>
    <scope>NUCLEOTIDE SEQUENCE [MRNA]</scope>
    <scope>FUNCTION</scope>
    <scope>CATALYTIC ACTIVITY</scope>
    <scope>BIOPHYSICOCHEMICAL PROPERTIES</scope>
    <scope>TISSUE SPECIFICITY</scope>
    <scope>DISRUPTION PHENOTYPE</scope>
</reference>
<reference key="2">
    <citation type="journal article" date="2005" name="Nature">
        <title>The map-based sequence of the rice genome.</title>
        <authorList>
            <consortium name="International rice genome sequencing project (IRGSP)"/>
        </authorList>
    </citation>
    <scope>NUCLEOTIDE SEQUENCE [LARGE SCALE GENOMIC DNA]</scope>
    <source>
        <strain>cv. Nipponbare</strain>
    </source>
</reference>
<reference key="3">
    <citation type="journal article" date="2008" name="Nucleic Acids Res.">
        <title>The rice annotation project database (RAP-DB): 2008 update.</title>
        <authorList>
            <consortium name="The rice annotation project (RAP)"/>
        </authorList>
    </citation>
    <scope>GENOME REANNOTATION</scope>
    <source>
        <strain>cv. Nipponbare</strain>
    </source>
</reference>
<reference key="4">
    <citation type="journal article" date="2013" name="Rice">
        <title>Improvement of the Oryza sativa Nipponbare reference genome using next generation sequence and optical map data.</title>
        <authorList>
            <person name="Kawahara Y."/>
            <person name="de la Bastide M."/>
            <person name="Hamilton J.P."/>
            <person name="Kanamori H."/>
            <person name="McCombie W.R."/>
            <person name="Ouyang S."/>
            <person name="Schwartz D.C."/>
            <person name="Tanaka T."/>
            <person name="Wu J."/>
            <person name="Zhou S."/>
            <person name="Childs K.L."/>
            <person name="Davidson R.M."/>
            <person name="Lin H."/>
            <person name="Quesada-Ocampo L."/>
            <person name="Vaillancourt B."/>
            <person name="Sakai H."/>
            <person name="Lee S.S."/>
            <person name="Kim J."/>
            <person name="Numa H."/>
            <person name="Itoh T."/>
            <person name="Buell C.R."/>
            <person name="Matsumoto T."/>
        </authorList>
    </citation>
    <scope>GENOME REANNOTATION</scope>
    <source>
        <strain>cv. Nipponbare</strain>
    </source>
</reference>
<reference key="5">
    <citation type="journal article" date="2003" name="Science">
        <title>Collection, mapping, and annotation of over 28,000 cDNA clones from japonica rice.</title>
        <authorList>
            <consortium name="The rice full-length cDNA consortium"/>
        </authorList>
    </citation>
    <scope>NUCLEOTIDE SEQUENCE [LARGE SCALE MRNA]</scope>
    <source>
        <strain>cv. Nipponbare</strain>
    </source>
</reference>